<gene>
    <name evidence="1" type="primary">rlmN</name>
    <name type="ordered locus">SCO5645</name>
    <name type="ORF">SC6A9.22c</name>
</gene>
<dbReference type="EC" id="2.1.1.192" evidence="1"/>
<dbReference type="EMBL" id="AL939124">
    <property type="protein sequence ID" value="CAA19907.1"/>
    <property type="molecule type" value="Genomic_DNA"/>
</dbReference>
<dbReference type="PIR" id="T35453">
    <property type="entry name" value="T35453"/>
</dbReference>
<dbReference type="RefSeq" id="NP_629775.1">
    <property type="nucleotide sequence ID" value="NC_003888.3"/>
</dbReference>
<dbReference type="RefSeq" id="WP_003973380.1">
    <property type="nucleotide sequence ID" value="NZ_VNID01000024.1"/>
</dbReference>
<dbReference type="SMR" id="O86754"/>
<dbReference type="FunCoup" id="O86754">
    <property type="interactions" value="232"/>
</dbReference>
<dbReference type="STRING" id="100226.gene:17763301"/>
<dbReference type="PaxDb" id="100226-SCO5645"/>
<dbReference type="GeneID" id="91383412"/>
<dbReference type="KEGG" id="sco:SCO5645"/>
<dbReference type="PATRIC" id="fig|100226.15.peg.5728"/>
<dbReference type="eggNOG" id="COG0820">
    <property type="taxonomic scope" value="Bacteria"/>
</dbReference>
<dbReference type="HOGENOM" id="CLU_029101_2_0_11"/>
<dbReference type="InParanoid" id="O86754"/>
<dbReference type="OrthoDB" id="9793973at2"/>
<dbReference type="PhylomeDB" id="O86754"/>
<dbReference type="Proteomes" id="UP000001973">
    <property type="component" value="Chromosome"/>
</dbReference>
<dbReference type="GO" id="GO:0005737">
    <property type="term" value="C:cytoplasm"/>
    <property type="evidence" value="ECO:0007669"/>
    <property type="project" value="UniProtKB-SubCell"/>
</dbReference>
<dbReference type="GO" id="GO:0051539">
    <property type="term" value="F:4 iron, 4 sulfur cluster binding"/>
    <property type="evidence" value="ECO:0007669"/>
    <property type="project" value="UniProtKB-UniRule"/>
</dbReference>
<dbReference type="GO" id="GO:0046872">
    <property type="term" value="F:metal ion binding"/>
    <property type="evidence" value="ECO:0007669"/>
    <property type="project" value="UniProtKB-KW"/>
</dbReference>
<dbReference type="GO" id="GO:0070040">
    <property type="term" value="F:rRNA (adenine(2503)-C2-)-methyltransferase activity"/>
    <property type="evidence" value="ECO:0007669"/>
    <property type="project" value="UniProtKB-UniRule"/>
</dbReference>
<dbReference type="GO" id="GO:0019843">
    <property type="term" value="F:rRNA binding"/>
    <property type="evidence" value="ECO:0007669"/>
    <property type="project" value="UniProtKB-UniRule"/>
</dbReference>
<dbReference type="GO" id="GO:0002935">
    <property type="term" value="F:tRNA (adenine(37)-C2)-methyltransferase activity"/>
    <property type="evidence" value="ECO:0007669"/>
    <property type="project" value="UniProtKB-UniRule"/>
</dbReference>
<dbReference type="GO" id="GO:0000049">
    <property type="term" value="F:tRNA binding"/>
    <property type="evidence" value="ECO:0007669"/>
    <property type="project" value="UniProtKB-UniRule"/>
</dbReference>
<dbReference type="GO" id="GO:0070475">
    <property type="term" value="P:rRNA base methylation"/>
    <property type="evidence" value="ECO:0000318"/>
    <property type="project" value="GO_Central"/>
</dbReference>
<dbReference type="GO" id="GO:0030488">
    <property type="term" value="P:tRNA methylation"/>
    <property type="evidence" value="ECO:0000318"/>
    <property type="project" value="GO_Central"/>
</dbReference>
<dbReference type="CDD" id="cd01335">
    <property type="entry name" value="Radical_SAM"/>
    <property type="match status" value="1"/>
</dbReference>
<dbReference type="FunFam" id="1.10.150.530:FF:000004">
    <property type="entry name" value="Probable dual-specificity RNA methyltransferase RlmN"/>
    <property type="match status" value="1"/>
</dbReference>
<dbReference type="FunFam" id="3.20.20.70:FF:000014">
    <property type="entry name" value="Probable dual-specificity RNA methyltransferase RlmN"/>
    <property type="match status" value="1"/>
</dbReference>
<dbReference type="Gene3D" id="1.10.150.530">
    <property type="match status" value="1"/>
</dbReference>
<dbReference type="Gene3D" id="3.20.20.70">
    <property type="entry name" value="Aldolase class I"/>
    <property type="match status" value="1"/>
</dbReference>
<dbReference type="HAMAP" id="MF_01849">
    <property type="entry name" value="RNA_methyltr_RlmN"/>
    <property type="match status" value="1"/>
</dbReference>
<dbReference type="InterPro" id="IPR013785">
    <property type="entry name" value="Aldolase_TIM"/>
</dbReference>
<dbReference type="InterPro" id="IPR040072">
    <property type="entry name" value="Methyltransferase_A"/>
</dbReference>
<dbReference type="InterPro" id="IPR027492">
    <property type="entry name" value="RNA_MTrfase_RlmN"/>
</dbReference>
<dbReference type="InterPro" id="IPR004383">
    <property type="entry name" value="rRNA_lsu_MTrfase_RlmN/Cfr"/>
</dbReference>
<dbReference type="InterPro" id="IPR007197">
    <property type="entry name" value="rSAM"/>
</dbReference>
<dbReference type="NCBIfam" id="TIGR00048">
    <property type="entry name" value="rRNA_mod_RlmN"/>
    <property type="match status" value="1"/>
</dbReference>
<dbReference type="PANTHER" id="PTHR30544">
    <property type="entry name" value="23S RRNA METHYLTRANSFERASE"/>
    <property type="match status" value="1"/>
</dbReference>
<dbReference type="PANTHER" id="PTHR30544:SF5">
    <property type="entry name" value="RADICAL SAM CORE DOMAIN-CONTAINING PROTEIN"/>
    <property type="match status" value="1"/>
</dbReference>
<dbReference type="Pfam" id="PF04055">
    <property type="entry name" value="Radical_SAM"/>
    <property type="match status" value="1"/>
</dbReference>
<dbReference type="PIRSF" id="PIRSF006004">
    <property type="entry name" value="CHP00048"/>
    <property type="match status" value="1"/>
</dbReference>
<dbReference type="SFLD" id="SFLDF00275">
    <property type="entry name" value="adenosine_C2_methyltransferase"/>
    <property type="match status" value="1"/>
</dbReference>
<dbReference type="SFLD" id="SFLDG01062">
    <property type="entry name" value="methyltransferase_(Class_A)"/>
    <property type="match status" value="1"/>
</dbReference>
<dbReference type="SUPFAM" id="SSF102114">
    <property type="entry name" value="Radical SAM enzymes"/>
    <property type="match status" value="1"/>
</dbReference>
<dbReference type="PROSITE" id="PS51918">
    <property type="entry name" value="RADICAL_SAM"/>
    <property type="match status" value="1"/>
</dbReference>
<protein>
    <recommendedName>
        <fullName evidence="1">Probable dual-specificity RNA methyltransferase RlmN</fullName>
        <ecNumber evidence="1">2.1.1.192</ecNumber>
    </recommendedName>
    <alternativeName>
        <fullName evidence="1">23S rRNA (adenine(2503)-C(2))-methyltransferase</fullName>
    </alternativeName>
    <alternativeName>
        <fullName evidence="1">23S rRNA m2A2503 methyltransferase</fullName>
    </alternativeName>
    <alternativeName>
        <fullName evidence="1">Ribosomal RNA large subunit methyltransferase N</fullName>
    </alternativeName>
    <alternativeName>
        <fullName evidence="1">tRNA (adenine(37)-C(2))-methyltransferase</fullName>
    </alternativeName>
    <alternativeName>
        <fullName evidence="1">tRNA m2A37 methyltransferase</fullName>
    </alternativeName>
</protein>
<sequence>MPKPGELTFVAPRGVKKPPRHLADLTPAERKEAVAAIGEKPFRAKQLSQHYFARYAHAPEQWTDIPAGSREGLREALLPELMTVVRHLSTDQGTTRKTLWKLFDGTLVESVLMRYPDRVTMCISSQAGCGMNCPFCATGQAGLDRNLSTAEIVHQIVDGMRALRDGEVPGGPARLSNIVFMGMGEPLANYNRVVGAIRRLTDPEPDGLGLSQRGITVSTVGLVPAIHRFTGEGFKCRLAISLHAPDDELRDTLVPVNTRWKVREVLDAGFEYAAKSGRRLSIEYALIRDINDQAWRGDRLGRLLRGRPVHVNLIPLNPTPGSKWTASRPEDEKAFVEAIAAHGVPVTIRDTRGQEIDGACGQLAASER</sequence>
<evidence type="ECO:0000255" key="1">
    <source>
        <dbReference type="HAMAP-Rule" id="MF_01849"/>
    </source>
</evidence>
<evidence type="ECO:0000255" key="2">
    <source>
        <dbReference type="PROSITE-ProRule" id="PRU01266"/>
    </source>
</evidence>
<keyword id="KW-0004">4Fe-4S</keyword>
<keyword id="KW-0963">Cytoplasm</keyword>
<keyword id="KW-1015">Disulfide bond</keyword>
<keyword id="KW-0408">Iron</keyword>
<keyword id="KW-0411">Iron-sulfur</keyword>
<keyword id="KW-0479">Metal-binding</keyword>
<keyword id="KW-0489">Methyltransferase</keyword>
<keyword id="KW-1185">Reference proteome</keyword>
<keyword id="KW-0698">rRNA processing</keyword>
<keyword id="KW-0949">S-adenosyl-L-methionine</keyword>
<keyword id="KW-0808">Transferase</keyword>
<keyword id="KW-0819">tRNA processing</keyword>
<feature type="chain" id="PRO_0000350474" description="Probable dual-specificity RNA methyltransferase RlmN">
    <location>
        <begin position="1"/>
        <end position="368"/>
    </location>
</feature>
<feature type="domain" description="Radical SAM core" evidence="2">
    <location>
        <begin position="115"/>
        <end position="355"/>
    </location>
</feature>
<feature type="active site" description="Proton acceptor" evidence="1">
    <location>
        <position position="109"/>
    </location>
</feature>
<feature type="active site" description="S-methylcysteine intermediate" evidence="1">
    <location>
        <position position="360"/>
    </location>
</feature>
<feature type="binding site" evidence="1">
    <location>
        <position position="129"/>
    </location>
    <ligand>
        <name>[4Fe-4S] cluster</name>
        <dbReference type="ChEBI" id="CHEBI:49883"/>
        <note>4Fe-4S-S-AdoMet</note>
    </ligand>
</feature>
<feature type="binding site" evidence="1">
    <location>
        <position position="133"/>
    </location>
    <ligand>
        <name>[4Fe-4S] cluster</name>
        <dbReference type="ChEBI" id="CHEBI:49883"/>
        <note>4Fe-4S-S-AdoMet</note>
    </ligand>
</feature>
<feature type="binding site" evidence="1">
    <location>
        <position position="136"/>
    </location>
    <ligand>
        <name>[4Fe-4S] cluster</name>
        <dbReference type="ChEBI" id="CHEBI:49883"/>
        <note>4Fe-4S-S-AdoMet</note>
    </ligand>
</feature>
<feature type="binding site" evidence="1">
    <location>
        <begin position="184"/>
        <end position="185"/>
    </location>
    <ligand>
        <name>S-adenosyl-L-methionine</name>
        <dbReference type="ChEBI" id="CHEBI:59789"/>
    </ligand>
</feature>
<feature type="binding site" evidence="1">
    <location>
        <position position="218"/>
    </location>
    <ligand>
        <name>S-adenosyl-L-methionine</name>
        <dbReference type="ChEBI" id="CHEBI:59789"/>
    </ligand>
</feature>
<feature type="binding site" evidence="1">
    <location>
        <begin position="241"/>
        <end position="243"/>
    </location>
    <ligand>
        <name>S-adenosyl-L-methionine</name>
        <dbReference type="ChEBI" id="CHEBI:59789"/>
    </ligand>
</feature>
<feature type="binding site" evidence="1">
    <location>
        <position position="317"/>
    </location>
    <ligand>
        <name>S-adenosyl-L-methionine</name>
        <dbReference type="ChEBI" id="CHEBI:59789"/>
    </ligand>
</feature>
<feature type="disulfide bond" description="(transient)" evidence="1">
    <location>
        <begin position="122"/>
        <end position="360"/>
    </location>
</feature>
<comment type="function">
    <text evidence="1">Specifically methylates position 2 of adenine 2503 in 23S rRNA and position 2 of adenine 37 in tRNAs.</text>
</comment>
<comment type="catalytic activity">
    <reaction evidence="1">
        <text>adenosine(2503) in 23S rRNA + 2 reduced [2Fe-2S]-[ferredoxin] + 2 S-adenosyl-L-methionine = 2-methyladenosine(2503) in 23S rRNA + 5'-deoxyadenosine + L-methionine + 2 oxidized [2Fe-2S]-[ferredoxin] + S-adenosyl-L-homocysteine</text>
        <dbReference type="Rhea" id="RHEA:42916"/>
        <dbReference type="Rhea" id="RHEA-COMP:10000"/>
        <dbReference type="Rhea" id="RHEA-COMP:10001"/>
        <dbReference type="Rhea" id="RHEA-COMP:10152"/>
        <dbReference type="Rhea" id="RHEA-COMP:10282"/>
        <dbReference type="ChEBI" id="CHEBI:17319"/>
        <dbReference type="ChEBI" id="CHEBI:33737"/>
        <dbReference type="ChEBI" id="CHEBI:33738"/>
        <dbReference type="ChEBI" id="CHEBI:57844"/>
        <dbReference type="ChEBI" id="CHEBI:57856"/>
        <dbReference type="ChEBI" id="CHEBI:59789"/>
        <dbReference type="ChEBI" id="CHEBI:74411"/>
        <dbReference type="ChEBI" id="CHEBI:74497"/>
        <dbReference type="EC" id="2.1.1.192"/>
    </reaction>
</comment>
<comment type="catalytic activity">
    <reaction evidence="1">
        <text>adenosine(37) in tRNA + 2 reduced [2Fe-2S]-[ferredoxin] + 2 S-adenosyl-L-methionine = 2-methyladenosine(37) in tRNA + 5'-deoxyadenosine + L-methionine + 2 oxidized [2Fe-2S]-[ferredoxin] + S-adenosyl-L-homocysteine</text>
        <dbReference type="Rhea" id="RHEA:43332"/>
        <dbReference type="Rhea" id="RHEA-COMP:10000"/>
        <dbReference type="Rhea" id="RHEA-COMP:10001"/>
        <dbReference type="Rhea" id="RHEA-COMP:10162"/>
        <dbReference type="Rhea" id="RHEA-COMP:10485"/>
        <dbReference type="ChEBI" id="CHEBI:17319"/>
        <dbReference type="ChEBI" id="CHEBI:33737"/>
        <dbReference type="ChEBI" id="CHEBI:33738"/>
        <dbReference type="ChEBI" id="CHEBI:57844"/>
        <dbReference type="ChEBI" id="CHEBI:57856"/>
        <dbReference type="ChEBI" id="CHEBI:59789"/>
        <dbReference type="ChEBI" id="CHEBI:74411"/>
        <dbReference type="ChEBI" id="CHEBI:74497"/>
        <dbReference type="EC" id="2.1.1.192"/>
    </reaction>
</comment>
<comment type="cofactor">
    <cofactor evidence="1">
        <name>[4Fe-4S] cluster</name>
        <dbReference type="ChEBI" id="CHEBI:49883"/>
    </cofactor>
    <text evidence="1">Binds 1 [4Fe-4S] cluster. The cluster is coordinated with 3 cysteines and an exchangeable S-adenosyl-L-methionine.</text>
</comment>
<comment type="subcellular location">
    <subcellularLocation>
        <location evidence="1">Cytoplasm</location>
    </subcellularLocation>
</comment>
<comment type="miscellaneous">
    <text evidence="1">Reaction proceeds by a ping-pong mechanism involving intermediate methylation of a conserved cysteine residue.</text>
</comment>
<comment type="similarity">
    <text evidence="1">Belongs to the radical SAM superfamily. RlmN family.</text>
</comment>
<accession>O86754</accession>
<reference key="1">
    <citation type="journal article" date="2002" name="Nature">
        <title>Complete genome sequence of the model actinomycete Streptomyces coelicolor A3(2).</title>
        <authorList>
            <person name="Bentley S.D."/>
            <person name="Chater K.F."/>
            <person name="Cerdeno-Tarraga A.-M."/>
            <person name="Challis G.L."/>
            <person name="Thomson N.R."/>
            <person name="James K.D."/>
            <person name="Harris D.E."/>
            <person name="Quail M.A."/>
            <person name="Kieser H."/>
            <person name="Harper D."/>
            <person name="Bateman A."/>
            <person name="Brown S."/>
            <person name="Chandra G."/>
            <person name="Chen C.W."/>
            <person name="Collins M."/>
            <person name="Cronin A."/>
            <person name="Fraser A."/>
            <person name="Goble A."/>
            <person name="Hidalgo J."/>
            <person name="Hornsby T."/>
            <person name="Howarth S."/>
            <person name="Huang C.-H."/>
            <person name="Kieser T."/>
            <person name="Larke L."/>
            <person name="Murphy L.D."/>
            <person name="Oliver K."/>
            <person name="O'Neil S."/>
            <person name="Rabbinowitsch E."/>
            <person name="Rajandream M.A."/>
            <person name="Rutherford K.M."/>
            <person name="Rutter S."/>
            <person name="Seeger K."/>
            <person name="Saunders D."/>
            <person name="Sharp S."/>
            <person name="Squares R."/>
            <person name="Squares S."/>
            <person name="Taylor K."/>
            <person name="Warren T."/>
            <person name="Wietzorrek A."/>
            <person name="Woodward J.R."/>
            <person name="Barrell B.G."/>
            <person name="Parkhill J."/>
            <person name="Hopwood D.A."/>
        </authorList>
    </citation>
    <scope>NUCLEOTIDE SEQUENCE [LARGE SCALE GENOMIC DNA]</scope>
    <source>
        <strain>ATCC BAA-471 / A3(2) / M145</strain>
    </source>
</reference>
<proteinExistence type="inferred from homology"/>
<name>RLMN_STRCO</name>
<organism>
    <name type="scientific">Streptomyces coelicolor (strain ATCC BAA-471 / A3(2) / M145)</name>
    <dbReference type="NCBI Taxonomy" id="100226"/>
    <lineage>
        <taxon>Bacteria</taxon>
        <taxon>Bacillati</taxon>
        <taxon>Actinomycetota</taxon>
        <taxon>Actinomycetes</taxon>
        <taxon>Kitasatosporales</taxon>
        <taxon>Streptomycetaceae</taxon>
        <taxon>Streptomyces</taxon>
        <taxon>Streptomyces albidoflavus group</taxon>
    </lineage>
</organism>